<comment type="similarity">
    <text evidence="1">Belongs to the UPF0757 family.</text>
</comment>
<organism>
    <name type="scientific">Escherichia coli (strain SMS-3-5 / SECEC)</name>
    <dbReference type="NCBI Taxonomy" id="439855"/>
    <lineage>
        <taxon>Bacteria</taxon>
        <taxon>Pseudomonadati</taxon>
        <taxon>Pseudomonadota</taxon>
        <taxon>Gammaproteobacteria</taxon>
        <taxon>Enterobacterales</taxon>
        <taxon>Enterobacteriaceae</taxon>
        <taxon>Escherichia</taxon>
    </lineage>
</organism>
<accession>B1LHZ6</accession>
<evidence type="ECO:0000255" key="1">
    <source>
        <dbReference type="HAMAP-Rule" id="MF_01455"/>
    </source>
</evidence>
<feature type="chain" id="PRO_0000388953" description="UPF0757 protein YmgG">
    <location>
        <begin position="1"/>
        <end position="114"/>
    </location>
</feature>
<sequence length="114" mass="10807">MKKKILAFGLISALFCSTPAMADMNRTTKGALLGAGVGLLTGNGVNGVLKGAAVGAGVGAVTEKGRDGKNARKGAKVGAAVGAVTGVLTGNGLEGAIKGAVIGGTGGAILGKMK</sequence>
<dbReference type="EMBL" id="CP000970">
    <property type="protein sequence ID" value="ACB15475.1"/>
    <property type="molecule type" value="Genomic_DNA"/>
</dbReference>
<dbReference type="RefSeq" id="WP_000726974.1">
    <property type="nucleotide sequence ID" value="NC_010498.1"/>
</dbReference>
<dbReference type="KEGG" id="ecm:EcSMS35_1978"/>
<dbReference type="HOGENOM" id="CLU_164687_0_0_6"/>
<dbReference type="Proteomes" id="UP000007011">
    <property type="component" value="Chromosome"/>
</dbReference>
<dbReference type="HAMAP" id="MF_01455">
    <property type="entry name" value="UPF0757"/>
    <property type="match status" value="1"/>
</dbReference>
<dbReference type="InterPro" id="IPR025693">
    <property type="entry name" value="Gly-zipper_OmpA-like_dom"/>
</dbReference>
<dbReference type="InterPro" id="IPR027367">
    <property type="entry name" value="Gly-zipper_YMGG"/>
</dbReference>
<dbReference type="InterPro" id="IPR022833">
    <property type="entry name" value="UPF0757_YmgG"/>
</dbReference>
<dbReference type="Pfam" id="PF13436">
    <property type="entry name" value="Gly-zipper_OmpA"/>
    <property type="match status" value="1"/>
</dbReference>
<dbReference type="Pfam" id="PF13441">
    <property type="entry name" value="Gly-zipper_YMGG"/>
    <property type="match status" value="1"/>
</dbReference>
<proteinExistence type="inferred from homology"/>
<protein>
    <recommendedName>
        <fullName evidence="1">UPF0757 protein YmgG</fullName>
    </recommendedName>
</protein>
<name>YMGG_ECOSM</name>
<reference key="1">
    <citation type="journal article" date="2008" name="J. Bacteriol.">
        <title>Insights into the environmental resistance gene pool from the genome sequence of the multidrug-resistant environmental isolate Escherichia coli SMS-3-5.</title>
        <authorList>
            <person name="Fricke W.F."/>
            <person name="Wright M.S."/>
            <person name="Lindell A.H."/>
            <person name="Harkins D.M."/>
            <person name="Baker-Austin C."/>
            <person name="Ravel J."/>
            <person name="Stepanauskas R."/>
        </authorList>
    </citation>
    <scope>NUCLEOTIDE SEQUENCE [LARGE SCALE GENOMIC DNA]</scope>
    <source>
        <strain>SMS-3-5 / SECEC</strain>
    </source>
</reference>
<gene>
    <name evidence="1" type="primary">ymgG</name>
    <name type="ordered locus">EcSMS35_1978</name>
</gene>